<reference key="1">
    <citation type="submission" date="2006-12" db="EMBL/GenBank/DDBJ databases">
        <title>Complete sequence of Shewanella sp. W3-18-1.</title>
        <authorList>
            <consortium name="US DOE Joint Genome Institute"/>
            <person name="Copeland A."/>
            <person name="Lucas S."/>
            <person name="Lapidus A."/>
            <person name="Barry K."/>
            <person name="Detter J.C."/>
            <person name="Glavina del Rio T."/>
            <person name="Hammon N."/>
            <person name="Israni S."/>
            <person name="Dalin E."/>
            <person name="Tice H."/>
            <person name="Pitluck S."/>
            <person name="Chain P."/>
            <person name="Malfatti S."/>
            <person name="Shin M."/>
            <person name="Vergez L."/>
            <person name="Schmutz J."/>
            <person name="Larimer F."/>
            <person name="Land M."/>
            <person name="Hauser L."/>
            <person name="Kyrpides N."/>
            <person name="Lykidis A."/>
            <person name="Tiedje J."/>
            <person name="Richardson P."/>
        </authorList>
    </citation>
    <scope>NUCLEOTIDE SEQUENCE [LARGE SCALE GENOMIC DNA]</scope>
    <source>
        <strain>W3-18-1</strain>
    </source>
</reference>
<dbReference type="EMBL" id="CP000503">
    <property type="protein sequence ID" value="ABM23232.1"/>
    <property type="molecule type" value="Genomic_DNA"/>
</dbReference>
<dbReference type="RefSeq" id="WP_011787775.1">
    <property type="nucleotide sequence ID" value="NC_008750.1"/>
</dbReference>
<dbReference type="SMR" id="A1REY7"/>
<dbReference type="KEGG" id="shw:Sputw3181_0381"/>
<dbReference type="HOGENOM" id="CLU_107907_2_0_6"/>
<dbReference type="Proteomes" id="UP000002597">
    <property type="component" value="Chromosome"/>
</dbReference>
<dbReference type="GO" id="GO:0005737">
    <property type="term" value="C:cytoplasm"/>
    <property type="evidence" value="ECO:0007669"/>
    <property type="project" value="UniProtKB-UniRule"/>
</dbReference>
<dbReference type="GO" id="GO:0009295">
    <property type="term" value="C:nucleoid"/>
    <property type="evidence" value="ECO:0007669"/>
    <property type="project" value="UniProtKB-SubCell"/>
</dbReference>
<dbReference type="GO" id="GO:0003700">
    <property type="term" value="F:DNA-binding transcription factor activity"/>
    <property type="evidence" value="ECO:0007669"/>
    <property type="project" value="UniProtKB-UniRule"/>
</dbReference>
<dbReference type="GO" id="GO:0000976">
    <property type="term" value="F:transcription cis-regulatory region binding"/>
    <property type="evidence" value="ECO:0007669"/>
    <property type="project" value="TreeGrafter"/>
</dbReference>
<dbReference type="GO" id="GO:2000143">
    <property type="term" value="P:negative regulation of DNA-templated transcription initiation"/>
    <property type="evidence" value="ECO:0007669"/>
    <property type="project" value="TreeGrafter"/>
</dbReference>
<dbReference type="CDD" id="cd16321">
    <property type="entry name" value="MraZ_C"/>
    <property type="match status" value="1"/>
</dbReference>
<dbReference type="CDD" id="cd16320">
    <property type="entry name" value="MraZ_N"/>
    <property type="match status" value="1"/>
</dbReference>
<dbReference type="FunFam" id="3.40.1550.20:FF:000001">
    <property type="entry name" value="Transcriptional regulator MraZ"/>
    <property type="match status" value="1"/>
</dbReference>
<dbReference type="Gene3D" id="3.40.1550.20">
    <property type="entry name" value="Transcriptional regulator MraZ domain"/>
    <property type="match status" value="1"/>
</dbReference>
<dbReference type="HAMAP" id="MF_01008">
    <property type="entry name" value="MraZ"/>
    <property type="match status" value="1"/>
</dbReference>
<dbReference type="InterPro" id="IPR003444">
    <property type="entry name" value="MraZ"/>
</dbReference>
<dbReference type="InterPro" id="IPR035644">
    <property type="entry name" value="MraZ_C"/>
</dbReference>
<dbReference type="InterPro" id="IPR020603">
    <property type="entry name" value="MraZ_dom"/>
</dbReference>
<dbReference type="InterPro" id="IPR035642">
    <property type="entry name" value="MraZ_N"/>
</dbReference>
<dbReference type="InterPro" id="IPR038619">
    <property type="entry name" value="MraZ_sf"/>
</dbReference>
<dbReference type="InterPro" id="IPR007159">
    <property type="entry name" value="SpoVT-AbrB_dom"/>
</dbReference>
<dbReference type="InterPro" id="IPR037914">
    <property type="entry name" value="SpoVT-AbrB_sf"/>
</dbReference>
<dbReference type="NCBIfam" id="TIGR00242">
    <property type="entry name" value="division/cell wall cluster transcriptional repressor MraZ"/>
    <property type="match status" value="1"/>
</dbReference>
<dbReference type="PANTHER" id="PTHR34701">
    <property type="entry name" value="TRANSCRIPTIONAL REGULATOR MRAZ"/>
    <property type="match status" value="1"/>
</dbReference>
<dbReference type="PANTHER" id="PTHR34701:SF1">
    <property type="entry name" value="TRANSCRIPTIONAL REGULATOR MRAZ"/>
    <property type="match status" value="1"/>
</dbReference>
<dbReference type="Pfam" id="PF02381">
    <property type="entry name" value="MraZ"/>
    <property type="match status" value="2"/>
</dbReference>
<dbReference type="SUPFAM" id="SSF89447">
    <property type="entry name" value="AbrB/MazE/MraZ-like"/>
    <property type="match status" value="1"/>
</dbReference>
<dbReference type="PROSITE" id="PS51740">
    <property type="entry name" value="SPOVT_ABRB"/>
    <property type="match status" value="2"/>
</dbReference>
<gene>
    <name evidence="1" type="primary">mraZ</name>
    <name type="ordered locus">Sputw3181_0381</name>
</gene>
<comment type="subunit">
    <text evidence="1">Forms oligomers.</text>
</comment>
<comment type="subcellular location">
    <subcellularLocation>
        <location evidence="1">Cytoplasm</location>
        <location evidence="1">Nucleoid</location>
    </subcellularLocation>
</comment>
<comment type="similarity">
    <text evidence="1">Belongs to the MraZ family.</text>
</comment>
<organism>
    <name type="scientific">Shewanella sp. (strain W3-18-1)</name>
    <dbReference type="NCBI Taxonomy" id="351745"/>
    <lineage>
        <taxon>Bacteria</taxon>
        <taxon>Pseudomonadati</taxon>
        <taxon>Pseudomonadota</taxon>
        <taxon>Gammaproteobacteria</taxon>
        <taxon>Alteromonadales</taxon>
        <taxon>Shewanellaceae</taxon>
        <taxon>Shewanella</taxon>
    </lineage>
</organism>
<protein>
    <recommendedName>
        <fullName>Transcriptional regulator MraZ</fullName>
    </recommendedName>
</protein>
<proteinExistence type="inferred from homology"/>
<evidence type="ECO:0000255" key="1">
    <source>
        <dbReference type="HAMAP-Rule" id="MF_01008"/>
    </source>
</evidence>
<evidence type="ECO:0000255" key="2">
    <source>
        <dbReference type="PROSITE-ProRule" id="PRU01076"/>
    </source>
</evidence>
<name>MRAZ_SHESW</name>
<feature type="chain" id="PRO_1000062938" description="Transcriptional regulator MraZ">
    <location>
        <begin position="1"/>
        <end position="152"/>
    </location>
</feature>
<feature type="domain" description="SpoVT-AbrB 1" evidence="2">
    <location>
        <begin position="5"/>
        <end position="52"/>
    </location>
</feature>
<feature type="domain" description="SpoVT-AbrB 2" evidence="2">
    <location>
        <begin position="81"/>
        <end position="124"/>
    </location>
</feature>
<accession>A1REY7</accession>
<keyword id="KW-0963">Cytoplasm</keyword>
<keyword id="KW-0238">DNA-binding</keyword>
<keyword id="KW-0677">Repeat</keyword>
<keyword id="KW-0804">Transcription</keyword>
<keyword id="KW-0805">Transcription regulation</keyword>
<sequence length="152" mass="17648">MFRGASAINLDTKGRIAIPVRYREPLQLEHQGRIVITVDIQSACLLLYPIHEWELIEAKLLKLSDTDKTQRSLKRLLLGYAHEVELDGNGRILLPPPLRQYANLDKRIMLVGQLNKFELWDEQAWLQQIDECQETIRSEELANNERLADFSL</sequence>